<comment type="function">
    <text evidence="1 4">Plays an important role in the cytoplasmic envelopment of tegument proteins and capsids during the assembly and egress processes. Also participates in viral entry at the fusion step probably by regulating the core fusion machinery.</text>
</comment>
<comment type="subunit">
    <text evidence="1 5">Interacts with BGLF2; this interaction is essential for the proper localization of each protein to the assembly complex and thus for the production of infectious virus.</text>
</comment>
<comment type="subcellular location">
    <subcellularLocation>
        <location evidence="1 3">Virion tegument</location>
    </subcellularLocation>
    <subcellularLocation>
        <location evidence="1">Virion membrane</location>
        <topology evidence="1">Lipid-anchor</topology>
    </subcellularLocation>
    <subcellularLocation>
        <location evidence="1">Host cell membrane</location>
        <topology evidence="1">Lipid-anchor</topology>
        <orientation evidence="1">Cytoplasmic side</orientation>
    </subcellularLocation>
    <subcellularLocation>
        <location evidence="1 4">Host Golgi apparatus membrane</location>
        <topology evidence="1">Lipid-anchor</topology>
        <orientation evidence="1">Cytoplasmic side</orientation>
    </subcellularLocation>
    <text evidence="1">Virion membrane-associated tegument protein. Associates with host membrane lipids rafts. During virion morphogenesis, this protein probably accumulates in the endosomes and trans-Golgi where secondary envelopment occurs. It is probably transported to the cell surface from where it is endocytosed and directed to the trans-Golgi network (TGN).</text>
</comment>
<comment type="PTM">
    <text evidence="1 4">Myristoylation and palmitoylation (probably on one or more of the nearby cysteines at the N-terminus) enable membrane-binding and Golgi apparatus-specific targeting and are essential for efficient packaging.</text>
</comment>
<comment type="PTM">
    <text evidence="1">Phosphorylated. Phosphorylation does not seem to be required for recycling to the host Golgi apparatus. Packaging is selective for underphosphorylated forms.</text>
</comment>
<comment type="similarity">
    <text evidence="1">Belongs to the herpesviridae cytoplasmic envelopment protein 3 family.</text>
</comment>
<accession>P0CK51</accession>
<accession>P03216</accession>
<accession>Q777D3</accession>
<organismHost>
    <name type="scientific">Homo sapiens</name>
    <name type="common">Human</name>
    <dbReference type="NCBI Taxonomy" id="9606"/>
</organismHost>
<dbReference type="EMBL" id="V01555">
    <property type="protein sequence ID" value="CAA24826.1"/>
    <property type="molecule type" value="Genomic_DNA"/>
</dbReference>
<dbReference type="EMBL" id="AJ507799">
    <property type="protein sequence ID" value="CAD53436.1"/>
    <property type="molecule type" value="Genomic_DNA"/>
</dbReference>
<dbReference type="PIR" id="H43043">
    <property type="entry name" value="QQBE36"/>
</dbReference>
<dbReference type="RefSeq" id="YP_401686.1">
    <property type="nucleotide sequence ID" value="NC_007605.1"/>
</dbReference>
<dbReference type="IntAct" id="P0CK51">
    <property type="interactions" value="1"/>
</dbReference>
<dbReference type="DNASU" id="3783765"/>
<dbReference type="GeneID" id="3783765"/>
<dbReference type="KEGG" id="vg:3783765"/>
<dbReference type="Proteomes" id="UP000153037">
    <property type="component" value="Segment"/>
</dbReference>
<dbReference type="GO" id="GO:0044178">
    <property type="term" value="C:host cell Golgi membrane"/>
    <property type="evidence" value="ECO:0007669"/>
    <property type="project" value="UniProtKB-SubCell"/>
</dbReference>
<dbReference type="GO" id="GO:0020002">
    <property type="term" value="C:host cell plasma membrane"/>
    <property type="evidence" value="ECO:0007669"/>
    <property type="project" value="UniProtKB-SubCell"/>
</dbReference>
<dbReference type="GO" id="GO:0016020">
    <property type="term" value="C:membrane"/>
    <property type="evidence" value="ECO:0007669"/>
    <property type="project" value="UniProtKB-KW"/>
</dbReference>
<dbReference type="GO" id="GO:0019033">
    <property type="term" value="C:viral tegument"/>
    <property type="evidence" value="ECO:0007669"/>
    <property type="project" value="UniProtKB-SubCell"/>
</dbReference>
<dbReference type="GO" id="GO:0055036">
    <property type="term" value="C:virion membrane"/>
    <property type="evidence" value="ECO:0007669"/>
    <property type="project" value="UniProtKB-SubCell"/>
</dbReference>
<dbReference type="GO" id="GO:0046760">
    <property type="term" value="P:viral budding from Golgi membrane"/>
    <property type="evidence" value="ECO:0007669"/>
    <property type="project" value="UniProtKB-UniRule"/>
</dbReference>
<dbReference type="HAMAP" id="MF_04042">
    <property type="entry name" value="HSV_CEP3_gammahv"/>
    <property type="match status" value="1"/>
</dbReference>
<dbReference type="InterPro" id="IPR024360">
    <property type="entry name" value="Herpesvirus_CEP3"/>
</dbReference>
<dbReference type="Pfam" id="PF10813">
    <property type="entry name" value="Herpesvir_UL11"/>
    <property type="match status" value="1"/>
</dbReference>
<protein>
    <recommendedName>
        <fullName evidence="1">Cytoplasmic envelopment protein 3</fullName>
    </recommendedName>
</protein>
<sequence length="75" mass="8470">MGALWSLCRRRVNSIGDVDGGIINLYNDYEEFNLETTKLIAAEEGRACGETNEGLEYDEDSENDELLFLPNKKPN</sequence>
<reference key="1">
    <citation type="journal article" date="1984" name="Nature">
        <title>DNA sequence and expression of the B95-8 Epstein-Barr virus genome.</title>
        <authorList>
            <person name="Baer R."/>
            <person name="Bankier A.T."/>
            <person name="Biggin M.D."/>
            <person name="Deininger P.L."/>
            <person name="Farrell P.J."/>
            <person name="Gibson T.J."/>
            <person name="Hatfull G."/>
            <person name="Hudson G.S."/>
            <person name="Satchwell S.C."/>
            <person name="Seguin C."/>
            <person name="Tuffnell P.S."/>
            <person name="Barrell B.G."/>
        </authorList>
    </citation>
    <scope>NUCLEOTIDE SEQUENCE [LARGE SCALE GENOMIC DNA]</scope>
</reference>
<reference key="2">
    <citation type="journal article" date="2003" name="Virology">
        <title>Updated Epstein-Barr virus (EBV) DNA sequence and analysis of a promoter for the BART (CST, BARF0) RNAs of EBV.</title>
        <authorList>
            <person name="de Jesus O."/>
            <person name="Smith P.R."/>
            <person name="Spender L.C."/>
            <person name="Elgueta Karstegl C."/>
            <person name="Niller H.H."/>
            <person name="Huang D."/>
            <person name="Farrell P.J."/>
        </authorList>
    </citation>
    <scope>GENOME REANNOTATION</scope>
</reference>
<reference key="3">
    <citation type="journal article" date="2004" name="Proc. Natl. Acad. Sci. U.S.A.">
        <title>Proteins of purified Epstein-Barr virus.</title>
        <authorList>
            <person name="Johannsen E."/>
            <person name="Luftig M."/>
            <person name="Chase M.R."/>
            <person name="Weicksel S."/>
            <person name="Cahir-McFarland E."/>
            <person name="Illanes D."/>
            <person name="Sarracino D."/>
            <person name="Kieff E."/>
        </authorList>
    </citation>
    <scope>IDENTIFICATION</scope>
    <scope>SUBCELLULAR LOCATION</scope>
</reference>
<reference key="4">
    <citation type="journal article" date="2012" name="J. Virol.">
        <title>Characterization and intracellular trafficking of Epstein-Barr virus BBLF1, a protein involved in virion maturation.</title>
        <authorList>
            <person name="Chiu Y.F."/>
            <person name="Sugden B."/>
            <person name="Chang P.J."/>
            <person name="Chen L.W."/>
            <person name="Lin Y.J."/>
            <person name="Lan Y.C."/>
            <person name="Lai C.H."/>
            <person name="Liou J.Y."/>
            <person name="Liu S.T."/>
            <person name="Hung C.H."/>
        </authorList>
    </citation>
    <scope>FUNCTION</scope>
    <scope>INTERACTION WITH HOST PACS1</scope>
    <scope>SUBCELLULAR LOCATION</scope>
    <scope>MYRISTOYLATION</scope>
    <scope>PALMITOYLATION</scope>
</reference>
<reference key="5">
    <citation type="journal article" date="2019" name="Front. Microbiol.">
        <title>Interaction Between BGLF2 and BBLF1 Is Required for the Efficient Production of Infectious Epstein-Barr Virus Particles.</title>
        <authorList>
            <person name="Hung C.H."/>
            <person name="Chiu Y.F."/>
            <person name="Wang W.H."/>
            <person name="Chen L.W."/>
            <person name="Chang P.J."/>
            <person name="Huang T.Y."/>
            <person name="Lin Y.J."/>
            <person name="Tsai W.J."/>
            <person name="Yang C.C."/>
        </authorList>
    </citation>
    <scope>INTERACTION WITH BGLF2</scope>
</reference>
<proteinExistence type="evidence at protein level"/>
<organism>
    <name type="scientific">Epstein-Barr virus (strain B95-8)</name>
    <name type="common">HHV-4</name>
    <name type="synonym">Human herpesvirus 4</name>
    <dbReference type="NCBI Taxonomy" id="10377"/>
    <lineage>
        <taxon>Viruses</taxon>
        <taxon>Duplodnaviria</taxon>
        <taxon>Heunggongvirae</taxon>
        <taxon>Peploviricota</taxon>
        <taxon>Herviviricetes</taxon>
        <taxon>Herpesvirales</taxon>
        <taxon>Orthoherpesviridae</taxon>
        <taxon>Gammaherpesvirinae</taxon>
        <taxon>Lymphocryptovirus</taxon>
        <taxon>Lymphocryptovirus humangamma4</taxon>
        <taxon>Epstein-Barr virus (strain GD1)</taxon>
    </lineage>
</organism>
<name>CEP3_EBVB9</name>
<gene>
    <name type="ORF">BBLF1</name>
</gene>
<evidence type="ECO:0000255" key="1">
    <source>
        <dbReference type="HAMAP-Rule" id="MF_04042"/>
    </source>
</evidence>
<evidence type="ECO:0000256" key="2">
    <source>
        <dbReference type="SAM" id="MobiDB-lite"/>
    </source>
</evidence>
<evidence type="ECO:0000269" key="3">
    <source>
    </source>
</evidence>
<evidence type="ECO:0000269" key="4">
    <source>
    </source>
</evidence>
<evidence type="ECO:0000269" key="5">
    <source>
    </source>
</evidence>
<keyword id="KW-1032">Host cell membrane</keyword>
<keyword id="KW-1040">Host Golgi apparatus</keyword>
<keyword id="KW-1043">Host membrane</keyword>
<keyword id="KW-0449">Lipoprotein</keyword>
<keyword id="KW-0472">Membrane</keyword>
<keyword id="KW-0519">Myristate</keyword>
<keyword id="KW-0564">Palmitate</keyword>
<keyword id="KW-0597">Phosphoprotein</keyword>
<keyword id="KW-1185">Reference proteome</keyword>
<keyword id="KW-0946">Virion</keyword>
<keyword id="KW-0920">Virion tegument</keyword>
<feature type="initiator methionine" description="Removed; by host" evidence="1">
    <location>
        <position position="1"/>
    </location>
</feature>
<feature type="chain" id="PRO_0000115933" description="Cytoplasmic envelopment protein 3">
    <location>
        <begin position="2"/>
        <end position="75"/>
    </location>
</feature>
<feature type="region of interest" description="Interaction with BGLF2" evidence="5">
    <location>
        <begin position="28"/>
        <end position="31"/>
    </location>
</feature>
<feature type="region of interest" description="Disordered" evidence="2">
    <location>
        <begin position="53"/>
        <end position="75"/>
    </location>
</feature>
<feature type="compositionally biased region" description="Acidic residues" evidence="2">
    <location>
        <begin position="53"/>
        <end position="65"/>
    </location>
</feature>
<feature type="lipid moiety-binding region" description="N-myristoyl glycine; by host" evidence="1">
    <location>
        <position position="2"/>
    </location>
</feature>